<evidence type="ECO:0000250" key="1"/>
<evidence type="ECO:0000255" key="2"/>
<evidence type="ECO:0000305" key="3"/>
<proteinExistence type="inferred from homology"/>
<accession>Q9TL08</accession>
<reference key="1">
    <citation type="journal article" date="1999" name="Proc. Natl. Acad. Sci. U.S.A.">
        <title>The complete chloroplast DNA sequence of the green alga Nephroselmis olivacea: insights into the architecture of ancestral chloroplast genomes.</title>
        <authorList>
            <person name="Turmel M."/>
            <person name="Otis C."/>
            <person name="Lemieux C."/>
        </authorList>
    </citation>
    <scope>NUCLEOTIDE SEQUENCE [LARGE SCALE GENOMIC DNA]</scope>
    <source>
        <strain>NIES-484 / S-N-5-8</strain>
    </source>
</reference>
<gene>
    <name type="primary">chlI</name>
</gene>
<feature type="chain" id="PRO_0000206870" description="Magnesium-chelatase subunit ChlI">
    <location>
        <begin position="1"/>
        <end position="355"/>
    </location>
</feature>
<feature type="binding site" evidence="2">
    <location>
        <begin position="46"/>
        <end position="53"/>
    </location>
    <ligand>
        <name>ATP</name>
        <dbReference type="ChEBI" id="CHEBI:30616"/>
    </ligand>
</feature>
<feature type="disulfide bond" description="Inhibitory under oxidizing conditions" evidence="1">
    <location>
        <begin position="281"/>
        <end position="323"/>
    </location>
</feature>
<comment type="function">
    <text evidence="1">Involved in chlorophyll biosynthesis. Catalyzes the insertion of magnesium ion into protoporphyrin IX to yield Mg-protoporphyrin IX. The magnesium-chelatase is a complex of three subunits, CHLI, CHLD and CHLH. The reaction takes place in two steps, with an ATP-dependent activation followed by an ATP-dependent chelation step (By similarity).</text>
</comment>
<comment type="catalytic activity">
    <reaction>
        <text>protoporphyrin IX + Mg(2+) + ATP + H2O = Mg-protoporphyrin IX + ADP + phosphate + 3 H(+)</text>
        <dbReference type="Rhea" id="RHEA:13961"/>
        <dbReference type="ChEBI" id="CHEBI:15377"/>
        <dbReference type="ChEBI" id="CHEBI:15378"/>
        <dbReference type="ChEBI" id="CHEBI:18420"/>
        <dbReference type="ChEBI" id="CHEBI:30616"/>
        <dbReference type="ChEBI" id="CHEBI:43474"/>
        <dbReference type="ChEBI" id="CHEBI:57306"/>
        <dbReference type="ChEBI" id="CHEBI:60492"/>
        <dbReference type="ChEBI" id="CHEBI:456216"/>
        <dbReference type="EC" id="6.6.1.1"/>
    </reaction>
</comment>
<comment type="activity regulation">
    <text evidence="1">Redox regulation; active in reducing conditions, inactive in oxidizing conditions. Thioredoxins f and m mediate the reversible reductive activation of oxidized CHLI (By similarity).</text>
</comment>
<comment type="pathway">
    <text>Porphyrin-containing compound metabolism; chlorophyll biosynthesis.</text>
</comment>
<comment type="subunit">
    <text>The magnesium chelatase complex is a heterotrimer consisting of subunits CHLI, CHLD and CHLH.</text>
</comment>
<comment type="subcellular location">
    <subcellularLocation>
        <location evidence="3">Plastid</location>
        <location evidence="3">Chloroplast</location>
    </subcellularLocation>
</comment>
<comment type="similarity">
    <text evidence="3">Belongs to the Mg-chelatase subunits D/I family.</text>
</comment>
<organism>
    <name type="scientific">Nephroselmis olivacea</name>
    <name type="common">Green alga</name>
    <dbReference type="NCBI Taxonomy" id="31312"/>
    <lineage>
        <taxon>Eukaryota</taxon>
        <taxon>Viridiplantae</taxon>
        <taxon>Chlorophyta</taxon>
        <taxon>Nephroselmidophyceae</taxon>
        <taxon>Nephroselmidales</taxon>
        <taxon>Nephroselmidaceae</taxon>
        <taxon>Nephroselmis</taxon>
    </lineage>
</organism>
<protein>
    <recommendedName>
        <fullName>Magnesium-chelatase subunit ChlI</fullName>
        <shortName>Mg-chelatase subunit I-1</shortName>
        <ecNumber>6.6.1.1</ecNumber>
    </recommendedName>
    <alternativeName>
        <fullName>Mg-protoporphyrin IX chelatase subunit ChlI</fullName>
    </alternativeName>
</protein>
<sequence length="355" mass="39224">MNATITTSEQARPVFPFTAIVGQEEMKLALLLNVIDPKIGGVMIMGDRGTGKSTTVRALVDLLPEIEVVENDPFNSHPYDPELMSDEVREKVHRGESIRTTTTKIPMVDLPLGATEDRVCGTIDIEKALTEGVKAFEPGLLAKANRGILYVDEVNLLDDHLVDVLLDSAASGWNTVEREGISICHPARFILVGSGNPEEGELRPQLLDRFGMHAQIGTVREPELRVKIVEQRATFDENPKEFRQSYETSQASLTSQLTEARARLRQVQTDYSLRVKISQVCSELNVDGLRGDIVTNRAAKALAALEGRTSVSVEDIGRIITLCLRHRLRKDPLESIDSGEKVQEVFSIVFGTNPL</sequence>
<name>CHLI_NEPOL</name>
<geneLocation type="chloroplast"/>
<keyword id="KW-0067">ATP-binding</keyword>
<keyword id="KW-0149">Chlorophyll biosynthesis</keyword>
<keyword id="KW-0150">Chloroplast</keyword>
<keyword id="KW-1015">Disulfide bond</keyword>
<keyword id="KW-0436">Ligase</keyword>
<keyword id="KW-0547">Nucleotide-binding</keyword>
<keyword id="KW-0602">Photosynthesis</keyword>
<keyword id="KW-0934">Plastid</keyword>
<dbReference type="EC" id="6.6.1.1"/>
<dbReference type="EMBL" id="AF137379">
    <property type="protein sequence ID" value="AAD54808.1"/>
    <property type="molecule type" value="Genomic_DNA"/>
</dbReference>
<dbReference type="RefSeq" id="NP_050837.1">
    <property type="nucleotide sequence ID" value="NC_000927.1"/>
</dbReference>
<dbReference type="SMR" id="Q9TL08"/>
<dbReference type="GeneID" id="801953"/>
<dbReference type="UniPathway" id="UPA00668"/>
<dbReference type="GO" id="GO:0009570">
    <property type="term" value="C:chloroplast stroma"/>
    <property type="evidence" value="ECO:0007669"/>
    <property type="project" value="TreeGrafter"/>
</dbReference>
<dbReference type="GO" id="GO:0005524">
    <property type="term" value="F:ATP binding"/>
    <property type="evidence" value="ECO:0007669"/>
    <property type="project" value="UniProtKB-KW"/>
</dbReference>
<dbReference type="GO" id="GO:0016887">
    <property type="term" value="F:ATP hydrolysis activity"/>
    <property type="evidence" value="ECO:0007669"/>
    <property type="project" value="InterPro"/>
</dbReference>
<dbReference type="GO" id="GO:0016851">
    <property type="term" value="F:magnesium chelatase activity"/>
    <property type="evidence" value="ECO:0007669"/>
    <property type="project" value="UniProtKB-EC"/>
</dbReference>
<dbReference type="GO" id="GO:0015995">
    <property type="term" value="P:chlorophyll biosynthetic process"/>
    <property type="evidence" value="ECO:0007669"/>
    <property type="project" value="UniProtKB-UniPathway"/>
</dbReference>
<dbReference type="GO" id="GO:0015979">
    <property type="term" value="P:photosynthesis"/>
    <property type="evidence" value="ECO:0007669"/>
    <property type="project" value="UniProtKB-KW"/>
</dbReference>
<dbReference type="CDD" id="cd00009">
    <property type="entry name" value="AAA"/>
    <property type="match status" value="1"/>
</dbReference>
<dbReference type="FunFam" id="1.10.8.80:FF:000001">
    <property type="entry name" value="Mg-protoporphyrin IX chelatase"/>
    <property type="match status" value="1"/>
</dbReference>
<dbReference type="FunFam" id="3.40.50.300:FF:000601">
    <property type="entry name" value="Mg-protoporphyrin IX chelatase"/>
    <property type="match status" value="1"/>
</dbReference>
<dbReference type="Gene3D" id="1.10.8.80">
    <property type="entry name" value="Magnesium chelatase subunit I, C-Terminal domain"/>
    <property type="match status" value="1"/>
</dbReference>
<dbReference type="Gene3D" id="3.40.50.300">
    <property type="entry name" value="P-loop containing nucleotide triphosphate hydrolases"/>
    <property type="match status" value="1"/>
</dbReference>
<dbReference type="InterPro" id="IPR003593">
    <property type="entry name" value="AAA+_ATPase"/>
</dbReference>
<dbReference type="InterPro" id="IPR045006">
    <property type="entry name" value="CHLI-like"/>
</dbReference>
<dbReference type="InterPro" id="IPR041628">
    <property type="entry name" value="ChlI/MoxR_AAA_lid"/>
</dbReference>
<dbReference type="InterPro" id="IPR011775">
    <property type="entry name" value="Mg_chelatase_ATPase-isu"/>
</dbReference>
<dbReference type="InterPro" id="IPR000523">
    <property type="entry name" value="Mg_chelatse_chII-like_cat_dom"/>
</dbReference>
<dbReference type="InterPro" id="IPR027417">
    <property type="entry name" value="P-loop_NTPase"/>
</dbReference>
<dbReference type="NCBIfam" id="TIGR02030">
    <property type="entry name" value="BchI-ChlI"/>
    <property type="match status" value="1"/>
</dbReference>
<dbReference type="PANTHER" id="PTHR32039">
    <property type="entry name" value="MAGNESIUM-CHELATASE SUBUNIT CHLI"/>
    <property type="match status" value="1"/>
</dbReference>
<dbReference type="PANTHER" id="PTHR32039:SF9">
    <property type="entry name" value="MAGNESIUM-CHELATASE SUBUNIT CHLI-2, CHLOROPLASTIC"/>
    <property type="match status" value="1"/>
</dbReference>
<dbReference type="Pfam" id="PF17863">
    <property type="entry name" value="AAA_lid_2"/>
    <property type="match status" value="1"/>
</dbReference>
<dbReference type="Pfam" id="PF01078">
    <property type="entry name" value="Mg_chelatase"/>
    <property type="match status" value="1"/>
</dbReference>
<dbReference type="SMART" id="SM00382">
    <property type="entry name" value="AAA"/>
    <property type="match status" value="1"/>
</dbReference>
<dbReference type="SUPFAM" id="SSF52540">
    <property type="entry name" value="P-loop containing nucleoside triphosphate hydrolases"/>
    <property type="match status" value="1"/>
</dbReference>